<sequence>MPAIVLIGAQWGDEGKGKATDLLGGRVQWVVRYQGGNNAGHTVVLPTGENFALHLIPSGVLTPGVTNVIGNGVVVDPGVLLDELKGLEDRGVDTSRLLISADAHLLLPYHVAIDKVTERYMGNKKIGTTGRGIGPCYQDKIARIGIRVADVLDREVLTHKIEAALELKNQILVKIYNRKALDPHQVVECLLEQAEGFRHRIADTRLLLNTALEAGETVLLEGSQGTLLDVDHGTYPYVTSSNPTAGGAAVGSGIGPTRITAVLGILKAYTTRVGSGPFPTELFDENGEYLSKTGGEFGVTTGRRRRCGWFDAVVARYATRVNGITDFFLTKLDVLSSLETVPVCVGYRIDGARINEMPMTQSDLHRAEPIYEELPGWWEDISAAREFDDLPAKARDYVLRLEELAGAHVSCIGVGPGREQTIVRRDILAARP</sequence>
<keyword id="KW-0963">Cytoplasm</keyword>
<keyword id="KW-0342">GTP-binding</keyword>
<keyword id="KW-0436">Ligase</keyword>
<keyword id="KW-0460">Magnesium</keyword>
<keyword id="KW-0479">Metal-binding</keyword>
<keyword id="KW-0547">Nucleotide-binding</keyword>
<keyword id="KW-0658">Purine biosynthesis</keyword>
<proteinExistence type="inferred from homology"/>
<feature type="chain" id="PRO_1000000865" description="Adenylosuccinate synthetase">
    <location>
        <begin position="1"/>
        <end position="432"/>
    </location>
</feature>
<feature type="active site" description="Proton acceptor" evidence="1">
    <location>
        <position position="13"/>
    </location>
</feature>
<feature type="active site" description="Proton donor" evidence="1">
    <location>
        <position position="41"/>
    </location>
</feature>
<feature type="binding site" evidence="1">
    <location>
        <begin position="12"/>
        <end position="18"/>
    </location>
    <ligand>
        <name>GTP</name>
        <dbReference type="ChEBI" id="CHEBI:37565"/>
    </ligand>
</feature>
<feature type="binding site" description="in other chain" evidence="1">
    <location>
        <begin position="13"/>
        <end position="16"/>
    </location>
    <ligand>
        <name>IMP</name>
        <dbReference type="ChEBI" id="CHEBI:58053"/>
        <note>ligand shared between dimeric partners</note>
    </ligand>
</feature>
<feature type="binding site" evidence="1">
    <location>
        <position position="13"/>
    </location>
    <ligand>
        <name>Mg(2+)</name>
        <dbReference type="ChEBI" id="CHEBI:18420"/>
    </ligand>
</feature>
<feature type="binding site" description="in other chain" evidence="1">
    <location>
        <begin position="38"/>
        <end position="41"/>
    </location>
    <ligand>
        <name>IMP</name>
        <dbReference type="ChEBI" id="CHEBI:58053"/>
        <note>ligand shared between dimeric partners</note>
    </ligand>
</feature>
<feature type="binding site" evidence="1">
    <location>
        <begin position="40"/>
        <end position="42"/>
    </location>
    <ligand>
        <name>GTP</name>
        <dbReference type="ChEBI" id="CHEBI:37565"/>
    </ligand>
</feature>
<feature type="binding site" evidence="1">
    <location>
        <position position="40"/>
    </location>
    <ligand>
        <name>Mg(2+)</name>
        <dbReference type="ChEBI" id="CHEBI:18420"/>
    </ligand>
</feature>
<feature type="binding site" description="in other chain" evidence="1">
    <location>
        <position position="129"/>
    </location>
    <ligand>
        <name>IMP</name>
        <dbReference type="ChEBI" id="CHEBI:58053"/>
        <note>ligand shared between dimeric partners</note>
    </ligand>
</feature>
<feature type="binding site" evidence="1">
    <location>
        <position position="143"/>
    </location>
    <ligand>
        <name>IMP</name>
        <dbReference type="ChEBI" id="CHEBI:58053"/>
        <note>ligand shared between dimeric partners</note>
    </ligand>
</feature>
<feature type="binding site" description="in other chain" evidence="1">
    <location>
        <position position="224"/>
    </location>
    <ligand>
        <name>IMP</name>
        <dbReference type="ChEBI" id="CHEBI:58053"/>
        <note>ligand shared between dimeric partners</note>
    </ligand>
</feature>
<feature type="binding site" description="in other chain" evidence="1">
    <location>
        <position position="239"/>
    </location>
    <ligand>
        <name>IMP</name>
        <dbReference type="ChEBI" id="CHEBI:58053"/>
        <note>ligand shared between dimeric partners</note>
    </ligand>
</feature>
<feature type="binding site" evidence="1">
    <location>
        <begin position="299"/>
        <end position="305"/>
    </location>
    <ligand>
        <name>substrate</name>
    </ligand>
</feature>
<feature type="binding site" description="in other chain" evidence="1">
    <location>
        <position position="303"/>
    </location>
    <ligand>
        <name>IMP</name>
        <dbReference type="ChEBI" id="CHEBI:58053"/>
        <note>ligand shared between dimeric partners</note>
    </ligand>
</feature>
<feature type="binding site" evidence="1">
    <location>
        <position position="305"/>
    </location>
    <ligand>
        <name>GTP</name>
        <dbReference type="ChEBI" id="CHEBI:37565"/>
    </ligand>
</feature>
<feature type="binding site" evidence="1">
    <location>
        <begin position="331"/>
        <end position="333"/>
    </location>
    <ligand>
        <name>GTP</name>
        <dbReference type="ChEBI" id="CHEBI:37565"/>
    </ligand>
</feature>
<feature type="binding site" evidence="1">
    <location>
        <begin position="413"/>
        <end position="415"/>
    </location>
    <ligand>
        <name>GTP</name>
        <dbReference type="ChEBI" id="CHEBI:37565"/>
    </ligand>
</feature>
<organism>
    <name type="scientific">Mycobacterium avium (strain 104)</name>
    <dbReference type="NCBI Taxonomy" id="243243"/>
    <lineage>
        <taxon>Bacteria</taxon>
        <taxon>Bacillati</taxon>
        <taxon>Actinomycetota</taxon>
        <taxon>Actinomycetes</taxon>
        <taxon>Mycobacteriales</taxon>
        <taxon>Mycobacteriaceae</taxon>
        <taxon>Mycobacterium</taxon>
        <taxon>Mycobacterium avium complex (MAC)</taxon>
    </lineage>
</organism>
<dbReference type="EC" id="6.3.4.4" evidence="1"/>
<dbReference type="EMBL" id="CP000479">
    <property type="protein sequence ID" value="ABK68046.1"/>
    <property type="molecule type" value="Genomic_DNA"/>
</dbReference>
<dbReference type="RefSeq" id="WP_011726241.1">
    <property type="nucleotide sequence ID" value="NC_008595.1"/>
</dbReference>
<dbReference type="SMR" id="A0QLW6"/>
<dbReference type="KEGG" id="mav:MAV_4777"/>
<dbReference type="HOGENOM" id="CLU_029848_0_0_11"/>
<dbReference type="UniPathway" id="UPA00075">
    <property type="reaction ID" value="UER00335"/>
</dbReference>
<dbReference type="Proteomes" id="UP000001574">
    <property type="component" value="Chromosome"/>
</dbReference>
<dbReference type="GO" id="GO:0005737">
    <property type="term" value="C:cytoplasm"/>
    <property type="evidence" value="ECO:0007669"/>
    <property type="project" value="UniProtKB-SubCell"/>
</dbReference>
<dbReference type="GO" id="GO:0004019">
    <property type="term" value="F:adenylosuccinate synthase activity"/>
    <property type="evidence" value="ECO:0007669"/>
    <property type="project" value="UniProtKB-UniRule"/>
</dbReference>
<dbReference type="GO" id="GO:0005525">
    <property type="term" value="F:GTP binding"/>
    <property type="evidence" value="ECO:0007669"/>
    <property type="project" value="UniProtKB-UniRule"/>
</dbReference>
<dbReference type="GO" id="GO:0000287">
    <property type="term" value="F:magnesium ion binding"/>
    <property type="evidence" value="ECO:0007669"/>
    <property type="project" value="UniProtKB-UniRule"/>
</dbReference>
<dbReference type="GO" id="GO:0044208">
    <property type="term" value="P:'de novo' AMP biosynthetic process"/>
    <property type="evidence" value="ECO:0007669"/>
    <property type="project" value="UniProtKB-UniRule"/>
</dbReference>
<dbReference type="GO" id="GO:0046040">
    <property type="term" value="P:IMP metabolic process"/>
    <property type="evidence" value="ECO:0007669"/>
    <property type="project" value="TreeGrafter"/>
</dbReference>
<dbReference type="CDD" id="cd03108">
    <property type="entry name" value="AdSS"/>
    <property type="match status" value="1"/>
</dbReference>
<dbReference type="FunFam" id="1.10.300.10:FF:000001">
    <property type="entry name" value="Adenylosuccinate synthetase"/>
    <property type="match status" value="1"/>
</dbReference>
<dbReference type="FunFam" id="3.90.170.10:FF:000001">
    <property type="entry name" value="Adenylosuccinate synthetase"/>
    <property type="match status" value="1"/>
</dbReference>
<dbReference type="Gene3D" id="3.40.440.10">
    <property type="entry name" value="Adenylosuccinate Synthetase, subunit A, domain 1"/>
    <property type="match status" value="1"/>
</dbReference>
<dbReference type="Gene3D" id="1.10.300.10">
    <property type="entry name" value="Adenylosuccinate Synthetase, subunit A, domain 2"/>
    <property type="match status" value="1"/>
</dbReference>
<dbReference type="Gene3D" id="3.90.170.10">
    <property type="entry name" value="Adenylosuccinate Synthetase, subunit A, domain 3"/>
    <property type="match status" value="1"/>
</dbReference>
<dbReference type="HAMAP" id="MF_00011">
    <property type="entry name" value="Adenylosucc_synth"/>
    <property type="match status" value="1"/>
</dbReference>
<dbReference type="InterPro" id="IPR018220">
    <property type="entry name" value="Adenylosuccin_syn_GTP-bd"/>
</dbReference>
<dbReference type="InterPro" id="IPR033128">
    <property type="entry name" value="Adenylosuccin_syn_Lys_AS"/>
</dbReference>
<dbReference type="InterPro" id="IPR042109">
    <property type="entry name" value="Adenylosuccinate_synth_dom1"/>
</dbReference>
<dbReference type="InterPro" id="IPR042110">
    <property type="entry name" value="Adenylosuccinate_synth_dom2"/>
</dbReference>
<dbReference type="InterPro" id="IPR042111">
    <property type="entry name" value="Adenylosuccinate_synth_dom3"/>
</dbReference>
<dbReference type="InterPro" id="IPR001114">
    <property type="entry name" value="Adenylosuccinate_synthetase"/>
</dbReference>
<dbReference type="InterPro" id="IPR027417">
    <property type="entry name" value="P-loop_NTPase"/>
</dbReference>
<dbReference type="NCBIfam" id="NF002223">
    <property type="entry name" value="PRK01117.1"/>
    <property type="match status" value="1"/>
</dbReference>
<dbReference type="NCBIfam" id="TIGR00184">
    <property type="entry name" value="purA"/>
    <property type="match status" value="1"/>
</dbReference>
<dbReference type="PANTHER" id="PTHR11846">
    <property type="entry name" value="ADENYLOSUCCINATE SYNTHETASE"/>
    <property type="match status" value="1"/>
</dbReference>
<dbReference type="PANTHER" id="PTHR11846:SF0">
    <property type="entry name" value="ADENYLOSUCCINATE SYNTHETASE"/>
    <property type="match status" value="1"/>
</dbReference>
<dbReference type="Pfam" id="PF00709">
    <property type="entry name" value="Adenylsucc_synt"/>
    <property type="match status" value="1"/>
</dbReference>
<dbReference type="SMART" id="SM00788">
    <property type="entry name" value="Adenylsucc_synt"/>
    <property type="match status" value="1"/>
</dbReference>
<dbReference type="SUPFAM" id="SSF52540">
    <property type="entry name" value="P-loop containing nucleoside triphosphate hydrolases"/>
    <property type="match status" value="1"/>
</dbReference>
<dbReference type="PROSITE" id="PS01266">
    <property type="entry name" value="ADENYLOSUCCIN_SYN_1"/>
    <property type="match status" value="1"/>
</dbReference>
<dbReference type="PROSITE" id="PS00513">
    <property type="entry name" value="ADENYLOSUCCIN_SYN_2"/>
    <property type="match status" value="1"/>
</dbReference>
<reference key="1">
    <citation type="submission" date="2006-10" db="EMBL/GenBank/DDBJ databases">
        <authorList>
            <person name="Fleischmann R.D."/>
            <person name="Dodson R.J."/>
            <person name="Haft D.H."/>
            <person name="Merkel J.S."/>
            <person name="Nelson W.C."/>
            <person name="Fraser C.M."/>
        </authorList>
    </citation>
    <scope>NUCLEOTIDE SEQUENCE [LARGE SCALE GENOMIC DNA]</scope>
    <source>
        <strain>104</strain>
    </source>
</reference>
<comment type="function">
    <text evidence="1">Plays an important role in the de novo pathway of purine nucleotide biosynthesis. Catalyzes the first committed step in the biosynthesis of AMP from IMP.</text>
</comment>
<comment type="catalytic activity">
    <reaction evidence="1">
        <text>IMP + L-aspartate + GTP = N(6)-(1,2-dicarboxyethyl)-AMP + GDP + phosphate + 2 H(+)</text>
        <dbReference type="Rhea" id="RHEA:15753"/>
        <dbReference type="ChEBI" id="CHEBI:15378"/>
        <dbReference type="ChEBI" id="CHEBI:29991"/>
        <dbReference type="ChEBI" id="CHEBI:37565"/>
        <dbReference type="ChEBI" id="CHEBI:43474"/>
        <dbReference type="ChEBI" id="CHEBI:57567"/>
        <dbReference type="ChEBI" id="CHEBI:58053"/>
        <dbReference type="ChEBI" id="CHEBI:58189"/>
        <dbReference type="EC" id="6.3.4.4"/>
    </reaction>
</comment>
<comment type="cofactor">
    <cofactor evidence="1">
        <name>Mg(2+)</name>
        <dbReference type="ChEBI" id="CHEBI:18420"/>
    </cofactor>
    <text evidence="1">Binds 1 Mg(2+) ion per subunit.</text>
</comment>
<comment type="pathway">
    <text evidence="1">Purine metabolism; AMP biosynthesis via de novo pathway; AMP from IMP: step 1/2.</text>
</comment>
<comment type="subunit">
    <text evidence="1">Homodimer.</text>
</comment>
<comment type="subcellular location">
    <subcellularLocation>
        <location evidence="1">Cytoplasm</location>
    </subcellularLocation>
</comment>
<comment type="similarity">
    <text evidence="1">Belongs to the adenylosuccinate synthetase family.</text>
</comment>
<name>PURA_MYCA1</name>
<gene>
    <name evidence="1" type="primary">purA</name>
    <name type="ordered locus">MAV_4777</name>
</gene>
<evidence type="ECO:0000255" key="1">
    <source>
        <dbReference type="HAMAP-Rule" id="MF_00011"/>
    </source>
</evidence>
<protein>
    <recommendedName>
        <fullName evidence="1">Adenylosuccinate synthetase</fullName>
        <shortName evidence="1">AMPSase</shortName>
        <shortName evidence="1">AdSS</shortName>
        <ecNumber evidence="1">6.3.4.4</ecNumber>
    </recommendedName>
    <alternativeName>
        <fullName evidence="1">IMP--aspartate ligase</fullName>
    </alternativeName>
</protein>
<accession>A0QLW6</accession>